<accession>P86689</accession>
<keyword id="KW-0011">Acute phase</keyword>
<keyword id="KW-0106">Calcium</keyword>
<keyword id="KW-0903">Direct protein sequencing</keyword>
<keyword id="KW-0479">Metal-binding</keyword>
<keyword id="KW-1185">Reference proteome</keyword>
<keyword id="KW-0964">Secreted</keyword>
<proteinExistence type="evidence at protein level"/>
<organism>
    <name type="scientific">Gadus morhua</name>
    <name type="common">Atlantic cod</name>
    <dbReference type="NCBI Taxonomy" id="8049"/>
    <lineage>
        <taxon>Eukaryota</taxon>
        <taxon>Metazoa</taxon>
        <taxon>Chordata</taxon>
        <taxon>Craniata</taxon>
        <taxon>Vertebrata</taxon>
        <taxon>Euteleostomi</taxon>
        <taxon>Actinopterygii</taxon>
        <taxon>Neopterygii</taxon>
        <taxon>Teleostei</taxon>
        <taxon>Neoteleostei</taxon>
        <taxon>Acanthomorphata</taxon>
        <taxon>Zeiogadaria</taxon>
        <taxon>Gadariae</taxon>
        <taxon>Gadiformes</taxon>
        <taxon>Gadoidei</taxon>
        <taxon>Gadidae</taxon>
        <taxon>Gadus</taxon>
    </lineage>
</organism>
<dbReference type="Proteomes" id="UP000694546">
    <property type="component" value="Unplaced"/>
</dbReference>
<dbReference type="GO" id="GO:0005576">
    <property type="term" value="C:extracellular region"/>
    <property type="evidence" value="ECO:0007669"/>
    <property type="project" value="UniProtKB-SubCell"/>
</dbReference>
<dbReference type="GO" id="GO:0046872">
    <property type="term" value="F:metal ion binding"/>
    <property type="evidence" value="ECO:0007669"/>
    <property type="project" value="UniProtKB-KW"/>
</dbReference>
<dbReference type="GO" id="GO:0006953">
    <property type="term" value="P:acute-phase response"/>
    <property type="evidence" value="ECO:0007669"/>
    <property type="project" value="UniProtKB-KW"/>
</dbReference>
<dbReference type="InterPro" id="IPR001759">
    <property type="entry name" value="Pentraxin-related"/>
</dbReference>
<dbReference type="PROSITE" id="PS51828">
    <property type="entry name" value="PTX_2"/>
    <property type="match status" value="1"/>
</dbReference>
<feature type="chain" id="PRO_0000397242" description="C-reactive protein P2 subunit 4">
    <location>
        <begin position="1"/>
        <end position="25" status="greater than"/>
    </location>
</feature>
<feature type="domain" description="Pentraxin (PTX)" evidence="3">
    <location>
        <begin position="1"/>
        <end position="25" status="greater than"/>
    </location>
</feature>
<feature type="non-terminal residue" evidence="5">
    <location>
        <position position="25"/>
    </location>
</feature>
<reference evidence="6" key="1">
    <citation type="journal article" date="2009" name="Fish Shellfish Immunol.">
        <title>Isolation of two C-reactive protein homologues from cod (Gadus morhua L.) serum.</title>
        <authorList>
            <person name="Gisladottir B."/>
            <person name="Gudmundsdottir S."/>
            <person name="Brown L."/>
            <person name="Jonsson Z.O."/>
            <person name="Magnadottir B."/>
        </authorList>
    </citation>
    <scope>PROTEIN SEQUENCE</scope>
    <scope>FUNCTION</scope>
    <scope>SUBUNIT</scope>
    <scope>SUBCELLULAR LOCATION</scope>
    <scope>GLYCOSYLATION</scope>
    <scope>IDENTIFICATION BY MASS SPECTROMETRY</scope>
    <source>
        <tissue evidence="4">Serum</tissue>
    </source>
</reference>
<comment type="function">
    <text evidence="1 4">Displays several functions associated with host defense: it promotes agglutination, bacterial capsular swelling, phagocytosis, and complement fixation through its calcium-dependent binding to phosphorylcholine.</text>
</comment>
<comment type="cofactor">
    <cofactor evidence="1">
        <name>Ca(2+)</name>
        <dbReference type="ChEBI" id="CHEBI:29108"/>
    </cofactor>
    <text evidence="1">Binds 2 calcium ions per subunit.</text>
</comment>
<comment type="subunit">
    <text evidence="4">Heteropentamer. Discoid arrangement of 5 non-covalently bound subunits 1, 2, 3 and 4.</text>
</comment>
<comment type="subcellular location">
    <subcellularLocation>
        <location evidence="4">Secreted</location>
    </subcellularLocation>
</comment>
<comment type="PTM">
    <text evidence="4">Glycosylated.</text>
</comment>
<comment type="similarity">
    <text evidence="2">Belongs to the pentraxin family.</text>
</comment>
<sequence length="25" mass="2781">GRSLVFPEETANSFVELFPAKELSL</sequence>
<evidence type="ECO:0000250" key="1">
    <source>
        <dbReference type="UniProtKB" id="P02741"/>
    </source>
</evidence>
<evidence type="ECO:0000255" key="2"/>
<evidence type="ECO:0000255" key="3">
    <source>
        <dbReference type="PROSITE-ProRule" id="PRU01172"/>
    </source>
</evidence>
<evidence type="ECO:0000269" key="4">
    <source>
    </source>
</evidence>
<evidence type="ECO:0000303" key="5">
    <source>
    </source>
</evidence>
<evidence type="ECO:0000305" key="6"/>
<protein>
    <recommendedName>
        <fullName>C-reactive protein P2 subunit 4</fullName>
    </recommendedName>
    <alternativeName>
        <fullName evidence="5">C-reactive protein PII subunit 4</fullName>
    </alternativeName>
</protein>
<name>CRP2_GADMO</name>